<evidence type="ECO:0000255" key="1">
    <source>
        <dbReference type="HAMAP-Rule" id="MF_01357"/>
    </source>
</evidence>
<dbReference type="EC" id="7.1.1.-" evidence="1"/>
<dbReference type="EMBL" id="AY958085">
    <property type="protein sequence ID" value="AAX45706.1"/>
    <property type="molecule type" value="Genomic_DNA"/>
</dbReference>
<dbReference type="RefSeq" id="YP_636384.1">
    <property type="nucleotide sequence ID" value="NC_008116.1"/>
</dbReference>
<dbReference type="SMR" id="Q32RZ2"/>
<dbReference type="GeneID" id="4108655"/>
<dbReference type="GO" id="GO:0009535">
    <property type="term" value="C:chloroplast thylakoid membrane"/>
    <property type="evidence" value="ECO:0007669"/>
    <property type="project" value="UniProtKB-SubCell"/>
</dbReference>
<dbReference type="GO" id="GO:0008137">
    <property type="term" value="F:NADH dehydrogenase (ubiquinone) activity"/>
    <property type="evidence" value="ECO:0007669"/>
    <property type="project" value="InterPro"/>
</dbReference>
<dbReference type="GO" id="GO:0048038">
    <property type="term" value="F:quinone binding"/>
    <property type="evidence" value="ECO:0007669"/>
    <property type="project" value="UniProtKB-KW"/>
</dbReference>
<dbReference type="GO" id="GO:0019684">
    <property type="term" value="P:photosynthesis, light reaction"/>
    <property type="evidence" value="ECO:0007669"/>
    <property type="project" value="UniProtKB-UniRule"/>
</dbReference>
<dbReference type="Gene3D" id="3.30.460.80">
    <property type="entry name" value="NADH:ubiquinone oxidoreductase, 30kDa subunit"/>
    <property type="match status" value="1"/>
</dbReference>
<dbReference type="HAMAP" id="MF_01357">
    <property type="entry name" value="NDH1_NuoC"/>
    <property type="match status" value="1"/>
</dbReference>
<dbReference type="InterPro" id="IPR010218">
    <property type="entry name" value="NADH_DH_suC"/>
</dbReference>
<dbReference type="InterPro" id="IPR037232">
    <property type="entry name" value="NADH_quin_OxRdtase_su_C/D-like"/>
</dbReference>
<dbReference type="InterPro" id="IPR001268">
    <property type="entry name" value="NADH_UbQ_OxRdtase_30kDa_su"/>
</dbReference>
<dbReference type="InterPro" id="IPR020396">
    <property type="entry name" value="NADH_UbQ_OxRdtase_CS"/>
</dbReference>
<dbReference type="NCBIfam" id="NF009141">
    <property type="entry name" value="PRK12494.1"/>
    <property type="match status" value="1"/>
</dbReference>
<dbReference type="PANTHER" id="PTHR10884:SF14">
    <property type="entry name" value="NADH DEHYDROGENASE [UBIQUINONE] IRON-SULFUR PROTEIN 3, MITOCHONDRIAL"/>
    <property type="match status" value="1"/>
</dbReference>
<dbReference type="PANTHER" id="PTHR10884">
    <property type="entry name" value="NADH DEHYDROGENASE UBIQUINONE IRON-SULFUR PROTEIN 3"/>
    <property type="match status" value="1"/>
</dbReference>
<dbReference type="Pfam" id="PF00329">
    <property type="entry name" value="Complex1_30kDa"/>
    <property type="match status" value="1"/>
</dbReference>
<dbReference type="SUPFAM" id="SSF143243">
    <property type="entry name" value="Nqo5-like"/>
    <property type="match status" value="1"/>
</dbReference>
<dbReference type="PROSITE" id="PS00542">
    <property type="entry name" value="COMPLEX1_30K"/>
    <property type="match status" value="1"/>
</dbReference>
<geneLocation type="chloroplast"/>
<reference key="1">
    <citation type="journal article" date="2005" name="BMC Biol.">
        <title>The complete chloroplast DNA sequences of the charophycean green algae Staurastrum and Zygnema reveal that the chloroplast genome underwent extensive changes during the evolution of the Zygnematales.</title>
        <authorList>
            <person name="Turmel M."/>
            <person name="Otis C."/>
            <person name="Lemieux C."/>
        </authorList>
    </citation>
    <scope>NUCLEOTIDE SEQUENCE [LARGE SCALE GENOMIC DNA]</scope>
</reference>
<comment type="function">
    <text evidence="1">NDH shuttles electrons from NAD(P)H:plastoquinone, via FMN and iron-sulfur (Fe-S) centers, to quinones in the photosynthetic chain and possibly in a chloroplast respiratory chain. The immediate electron acceptor for the enzyme in this species is believed to be plastoquinone. Couples the redox reaction to proton translocation, and thus conserves the redox energy in a proton gradient.</text>
</comment>
<comment type="catalytic activity">
    <reaction evidence="1">
        <text>a plastoquinone + NADH + (n+1) H(+)(in) = a plastoquinol + NAD(+) + n H(+)(out)</text>
        <dbReference type="Rhea" id="RHEA:42608"/>
        <dbReference type="Rhea" id="RHEA-COMP:9561"/>
        <dbReference type="Rhea" id="RHEA-COMP:9562"/>
        <dbReference type="ChEBI" id="CHEBI:15378"/>
        <dbReference type="ChEBI" id="CHEBI:17757"/>
        <dbReference type="ChEBI" id="CHEBI:57540"/>
        <dbReference type="ChEBI" id="CHEBI:57945"/>
        <dbReference type="ChEBI" id="CHEBI:62192"/>
    </reaction>
</comment>
<comment type="catalytic activity">
    <reaction evidence="1">
        <text>a plastoquinone + NADPH + (n+1) H(+)(in) = a plastoquinol + NADP(+) + n H(+)(out)</text>
        <dbReference type="Rhea" id="RHEA:42612"/>
        <dbReference type="Rhea" id="RHEA-COMP:9561"/>
        <dbReference type="Rhea" id="RHEA-COMP:9562"/>
        <dbReference type="ChEBI" id="CHEBI:15378"/>
        <dbReference type="ChEBI" id="CHEBI:17757"/>
        <dbReference type="ChEBI" id="CHEBI:57783"/>
        <dbReference type="ChEBI" id="CHEBI:58349"/>
        <dbReference type="ChEBI" id="CHEBI:62192"/>
    </reaction>
</comment>
<comment type="subunit">
    <text evidence="1">NDH is composed of at least 16 different subunits, 5 of which are encoded in the nucleus.</text>
</comment>
<comment type="subcellular location">
    <subcellularLocation>
        <location evidence="1">Plastid</location>
        <location evidence="1">Chloroplast thylakoid membrane</location>
        <topology evidence="1">Peripheral membrane protein</topology>
        <orientation evidence="1">Stromal side</orientation>
    </subcellularLocation>
</comment>
<comment type="similarity">
    <text evidence="1">Belongs to the complex I 30 kDa subunit family.</text>
</comment>
<organism>
    <name type="scientific">Staurastrum punctulatum</name>
    <name type="common">Green alga</name>
    <name type="synonym">Cosmoastrum punctulatum</name>
    <dbReference type="NCBI Taxonomy" id="102822"/>
    <lineage>
        <taxon>Eukaryota</taxon>
        <taxon>Viridiplantae</taxon>
        <taxon>Streptophyta</taxon>
        <taxon>Zygnematophyceae</taxon>
        <taxon>Zygnematophycidae</taxon>
        <taxon>Desmidiales</taxon>
        <taxon>Desmidiaceae</taxon>
        <taxon>Staurastrum</taxon>
    </lineage>
</organism>
<keyword id="KW-0150">Chloroplast</keyword>
<keyword id="KW-0472">Membrane</keyword>
<keyword id="KW-0520">NAD</keyword>
<keyword id="KW-0521">NADP</keyword>
<keyword id="KW-0934">Plastid</keyword>
<keyword id="KW-0618">Plastoquinone</keyword>
<keyword id="KW-0874">Quinone</keyword>
<keyword id="KW-0793">Thylakoid</keyword>
<keyword id="KW-1278">Translocase</keyword>
<keyword id="KW-0813">Transport</keyword>
<name>NDHJ_STAPU</name>
<proteinExistence type="inferred from homology"/>
<feature type="chain" id="PRO_0000358306" description="NAD(P)H-quinone oxidoreductase subunit J, chloroplastic">
    <location>
        <begin position="1"/>
        <end position="169"/>
    </location>
</feature>
<gene>
    <name evidence="1" type="primary">ndhJ</name>
</gene>
<accession>Q32RZ2</accession>
<sequence length="169" mass="19763">MTDNFLSNSSQKQGRLSAWLTIHRLSHRPLGFDYQGVEIVEVRPEDWPSVAVSLYVYGFNYLRLQCGYDVFPGGPLASIYYLTKVQDGADQPEEVCIKIFVSRDNPKIPSAFWIWKSADFQERESYDMLGIIYESHPHLKRILMPESWLGWPLRKDYITPDFFELQDAY</sequence>
<protein>
    <recommendedName>
        <fullName evidence="1">NAD(P)H-quinone oxidoreductase subunit J, chloroplastic</fullName>
        <ecNumber evidence="1">7.1.1.-</ecNumber>
    </recommendedName>
    <alternativeName>
        <fullName>NAD(P)H dehydrogenase subunit J</fullName>
    </alternativeName>
    <alternativeName>
        <fullName evidence="1">NADH-plastoquinone oxidoreductase subunit J</fullName>
    </alternativeName>
</protein>